<reference key="1">
    <citation type="submission" date="2009-05" db="EMBL/GenBank/DDBJ databases">
        <title>Complete sequence of chromosome of Thauera sp. MZ1T.</title>
        <authorList>
            <consortium name="US DOE Joint Genome Institute"/>
            <person name="Lucas S."/>
            <person name="Copeland A."/>
            <person name="Lapidus A."/>
            <person name="Glavina del Rio T."/>
            <person name="Dalin E."/>
            <person name="Tice H."/>
            <person name="Bruce D."/>
            <person name="Goodwin L."/>
            <person name="Pitluck S."/>
            <person name="Sims D."/>
            <person name="Brettin T."/>
            <person name="Detter J.C."/>
            <person name="Han C."/>
            <person name="Larimer F."/>
            <person name="Land M."/>
            <person name="Hauser L."/>
            <person name="Kyrpides N."/>
            <person name="Mikhailova N."/>
            <person name="Sayler G.S."/>
        </authorList>
    </citation>
    <scope>NUCLEOTIDE SEQUENCE [LARGE SCALE GENOMIC DNA]</scope>
    <source>
        <strain>MZ1T</strain>
    </source>
</reference>
<protein>
    <recommendedName>
        <fullName evidence="1">Flagellar transcriptional regulator FlhC</fullName>
    </recommendedName>
</protein>
<sequence length="195" mass="21909">MKNKSVIEEADDVRRAVEMVQLGARMQMLEVETRLSREKLLRIYKEVRGASPPKGMLPFSTDWFMTWQPNVHSSLFMNLYRYFTGPAGVHGLDAILKSYHLYLDHIETGVIEPALSLTRAWTLVRFFDADLLQMAACTRCGGEFVAHAHDPVHDYVCGLCNMPSRAGSARRKTTTRKAVAPTHKTTAASRKAVVA</sequence>
<evidence type="ECO:0000255" key="1">
    <source>
        <dbReference type="HAMAP-Rule" id="MF_01891"/>
    </source>
</evidence>
<evidence type="ECO:0000256" key="2">
    <source>
        <dbReference type="SAM" id="MobiDB-lite"/>
    </source>
</evidence>
<accession>C4KBU2</accession>
<dbReference type="EMBL" id="CP001281">
    <property type="protein sequence ID" value="ACR01823.1"/>
    <property type="molecule type" value="Genomic_DNA"/>
</dbReference>
<dbReference type="RefSeq" id="WP_004309313.1">
    <property type="nucleotide sequence ID" value="NZ_SSFD01000026.1"/>
</dbReference>
<dbReference type="SMR" id="C4KBU2"/>
<dbReference type="STRING" id="85643.Tmz1t_3228"/>
<dbReference type="KEGG" id="tmz:Tmz1t_3228"/>
<dbReference type="eggNOG" id="ENOG502Z927">
    <property type="taxonomic scope" value="Bacteria"/>
</dbReference>
<dbReference type="HOGENOM" id="CLU_122824_0_0_4"/>
<dbReference type="OrthoDB" id="5570801at2"/>
<dbReference type="Proteomes" id="UP000002186">
    <property type="component" value="Chromosome"/>
</dbReference>
<dbReference type="GO" id="GO:0005737">
    <property type="term" value="C:cytoplasm"/>
    <property type="evidence" value="ECO:0007669"/>
    <property type="project" value="UniProtKB-SubCell"/>
</dbReference>
<dbReference type="GO" id="GO:0003677">
    <property type="term" value="F:DNA binding"/>
    <property type="evidence" value="ECO:0007669"/>
    <property type="project" value="UniProtKB-UniRule"/>
</dbReference>
<dbReference type="GO" id="GO:0008270">
    <property type="term" value="F:zinc ion binding"/>
    <property type="evidence" value="ECO:0007669"/>
    <property type="project" value="UniProtKB-UniRule"/>
</dbReference>
<dbReference type="GO" id="GO:0044781">
    <property type="term" value="P:bacterial-type flagellum organization"/>
    <property type="evidence" value="ECO:0007669"/>
    <property type="project" value="UniProtKB-KW"/>
</dbReference>
<dbReference type="GO" id="GO:0045893">
    <property type="term" value="P:positive regulation of DNA-templated transcription"/>
    <property type="evidence" value="ECO:0007669"/>
    <property type="project" value="InterPro"/>
</dbReference>
<dbReference type="GO" id="GO:1902208">
    <property type="term" value="P:regulation of bacterial-type flagellum assembly"/>
    <property type="evidence" value="ECO:0007669"/>
    <property type="project" value="UniProtKB-UniRule"/>
</dbReference>
<dbReference type="HAMAP" id="MF_01891">
    <property type="entry name" value="FhlC"/>
    <property type="match status" value="1"/>
</dbReference>
<dbReference type="InterPro" id="IPR007944">
    <property type="entry name" value="FlhC"/>
</dbReference>
<dbReference type="NCBIfam" id="NF009365">
    <property type="entry name" value="PRK12722.1"/>
    <property type="match status" value="1"/>
</dbReference>
<dbReference type="Pfam" id="PF05280">
    <property type="entry name" value="FlhC"/>
    <property type="match status" value="1"/>
</dbReference>
<dbReference type="PIRSF" id="PIRSF003159">
    <property type="entry name" value="FlhC"/>
    <property type="match status" value="1"/>
</dbReference>
<dbReference type="SUPFAM" id="SSF160930">
    <property type="entry name" value="FlhC-like"/>
    <property type="match status" value="1"/>
</dbReference>
<proteinExistence type="inferred from homology"/>
<organism>
    <name type="scientific">Thauera aminoaromatica</name>
    <dbReference type="NCBI Taxonomy" id="164330"/>
    <lineage>
        <taxon>Bacteria</taxon>
        <taxon>Pseudomonadati</taxon>
        <taxon>Pseudomonadota</taxon>
        <taxon>Betaproteobacteria</taxon>
        <taxon>Rhodocyclales</taxon>
        <taxon>Zoogloeaceae</taxon>
        <taxon>Thauera</taxon>
    </lineage>
</organism>
<feature type="chain" id="PRO_0000406766" description="Flagellar transcriptional regulator FlhC">
    <location>
        <begin position="1"/>
        <end position="195"/>
    </location>
</feature>
<feature type="region of interest" description="Disordered" evidence="2">
    <location>
        <begin position="165"/>
        <end position="195"/>
    </location>
</feature>
<feature type="binding site" evidence="1">
    <location>
        <position position="137"/>
    </location>
    <ligand>
        <name>Zn(2+)</name>
        <dbReference type="ChEBI" id="CHEBI:29105"/>
    </ligand>
</feature>
<feature type="binding site" evidence="1">
    <location>
        <position position="140"/>
    </location>
    <ligand>
        <name>Zn(2+)</name>
        <dbReference type="ChEBI" id="CHEBI:29105"/>
    </ligand>
</feature>
<feature type="binding site" evidence="1">
    <location>
        <position position="157"/>
    </location>
    <ligand>
        <name>Zn(2+)</name>
        <dbReference type="ChEBI" id="CHEBI:29105"/>
    </ligand>
</feature>
<feature type="binding site" evidence="1">
    <location>
        <position position="160"/>
    </location>
    <ligand>
        <name>Zn(2+)</name>
        <dbReference type="ChEBI" id="CHEBI:29105"/>
    </ligand>
</feature>
<name>FLHC_THASP</name>
<gene>
    <name evidence="1" type="primary">flhC</name>
    <name type="ordered locus">Tmz1t_3228</name>
</gene>
<keyword id="KW-0010">Activator</keyword>
<keyword id="KW-1005">Bacterial flagellum biogenesis</keyword>
<keyword id="KW-0963">Cytoplasm</keyword>
<keyword id="KW-0238">DNA-binding</keyword>
<keyword id="KW-0479">Metal-binding</keyword>
<keyword id="KW-1185">Reference proteome</keyword>
<keyword id="KW-0804">Transcription</keyword>
<keyword id="KW-0805">Transcription regulation</keyword>
<keyword id="KW-0862">Zinc</keyword>
<comment type="function">
    <text evidence="1">Functions in complex with FlhD as a master transcriptional regulator that regulates transcription of several flagellar and non-flagellar operons by binding to their promoter region. Activates expression of class 2 flagellar genes, including fliA, which is a flagellum-specific sigma factor that turns on the class 3 genes. Also regulates genes whose products function in a variety of physiological pathways.</text>
</comment>
<comment type="cofactor">
    <cofactor evidence="1">
        <name>Zn(2+)</name>
        <dbReference type="ChEBI" id="CHEBI:29105"/>
    </cofactor>
    <text evidence="1">Binds 1 zinc ion per subunit.</text>
</comment>
<comment type="subunit">
    <text evidence="1">Heterohexamer composed of two FlhC and four FlhD subunits. Each FlhC binds a FlhD dimer, forming a heterotrimer, and a hexamer assembles by dimerization of two heterotrimers.</text>
</comment>
<comment type="subcellular location">
    <subcellularLocation>
        <location evidence="1">Cytoplasm</location>
    </subcellularLocation>
</comment>
<comment type="similarity">
    <text evidence="1">Belongs to the FlhC family.</text>
</comment>